<dbReference type="EMBL" id="AF250844">
    <property type="protein sequence ID" value="AAF64514.1"/>
    <property type="molecule type" value="mRNA"/>
</dbReference>
<dbReference type="EMBL" id="AK168849">
    <property type="protein sequence ID" value="BAE40671.1"/>
    <property type="molecule type" value="mRNA"/>
</dbReference>
<dbReference type="EMBL" id="U60872">
    <property type="protein sequence ID" value="AAC52672.1"/>
    <property type="molecule type" value="Genomic_DNA"/>
</dbReference>
<dbReference type="EMBL" id="U59881">
    <property type="protein sequence ID" value="AAC52672.1"/>
    <property type="status" value="JOINED"/>
    <property type="molecule type" value="Genomic_DNA"/>
</dbReference>
<dbReference type="EMBL" id="U59882">
    <property type="protein sequence ID" value="AAC52672.1"/>
    <property type="status" value="JOINED"/>
    <property type="molecule type" value="Genomic_DNA"/>
</dbReference>
<dbReference type="EMBL" id="U59883">
    <property type="protein sequence ID" value="AAC52672.1"/>
    <property type="status" value="JOINED"/>
    <property type="molecule type" value="Genomic_DNA"/>
</dbReference>
<dbReference type="EMBL" id="U59884">
    <property type="protein sequence ID" value="AAC52672.1"/>
    <property type="status" value="JOINED"/>
    <property type="molecule type" value="Genomic_DNA"/>
</dbReference>
<dbReference type="CCDS" id="CCDS40784.1"/>
<dbReference type="RefSeq" id="NP_001311451.1">
    <property type="nucleotide sequence ID" value="NM_001324522.1"/>
</dbReference>
<dbReference type="RefSeq" id="NP_081086.2">
    <property type="nucleotide sequence ID" value="NM_026810.2"/>
</dbReference>
<dbReference type="SMR" id="Q9JK91"/>
<dbReference type="BioGRID" id="201435">
    <property type="interactions" value="2"/>
</dbReference>
<dbReference type="CORUM" id="Q9JK91"/>
<dbReference type="FunCoup" id="Q9JK91">
    <property type="interactions" value="3049"/>
</dbReference>
<dbReference type="STRING" id="10090.ENSMUSP00000035079"/>
<dbReference type="GlyConnect" id="2261">
    <property type="glycosylation" value="1 N-Linked glycan (1 site)"/>
</dbReference>
<dbReference type="GlyCosmos" id="Q9JK91">
    <property type="glycosylation" value="1 site, 1 glycan"/>
</dbReference>
<dbReference type="GlyGen" id="Q9JK91">
    <property type="glycosylation" value="1 site, 1 N-linked glycan (1 site)"/>
</dbReference>
<dbReference type="iPTMnet" id="Q9JK91"/>
<dbReference type="PhosphoSitePlus" id="Q9JK91"/>
<dbReference type="PaxDb" id="10090-ENSMUSP00000035079"/>
<dbReference type="PeptideAtlas" id="Q9JK91"/>
<dbReference type="ProteomicsDB" id="252576"/>
<dbReference type="Pumba" id="Q9JK91"/>
<dbReference type="Antibodypedia" id="4599">
    <property type="antibodies" value="921 antibodies from 46 providers"/>
</dbReference>
<dbReference type="DNASU" id="17350"/>
<dbReference type="Ensembl" id="ENSMUST00000035079.10">
    <property type="protein sequence ID" value="ENSMUSP00000035079.4"/>
    <property type="gene ID" value="ENSMUSG00000032498.10"/>
</dbReference>
<dbReference type="GeneID" id="17350"/>
<dbReference type="KEGG" id="mmu:17350"/>
<dbReference type="UCSC" id="uc009rvp.2">
    <property type="organism name" value="mouse"/>
</dbReference>
<dbReference type="AGR" id="MGI:101938"/>
<dbReference type="CTD" id="4292"/>
<dbReference type="MGI" id="MGI:101938">
    <property type="gene designation" value="Mlh1"/>
</dbReference>
<dbReference type="VEuPathDB" id="HostDB:ENSMUSG00000032498"/>
<dbReference type="eggNOG" id="KOG1979">
    <property type="taxonomic scope" value="Eukaryota"/>
</dbReference>
<dbReference type="GeneTree" id="ENSGT00800000124177"/>
<dbReference type="HOGENOM" id="CLU_004131_2_0_1"/>
<dbReference type="InParanoid" id="Q9JK91"/>
<dbReference type="OMA" id="ANYHVKK"/>
<dbReference type="OrthoDB" id="10263226at2759"/>
<dbReference type="PhylomeDB" id="Q9JK91"/>
<dbReference type="TreeFam" id="TF300493"/>
<dbReference type="Reactome" id="R-MMU-5358565">
    <property type="pathway name" value="Mismatch repair (MMR) directed by MSH2:MSH6 (MutSalpha)"/>
</dbReference>
<dbReference type="BioGRID-ORCS" id="17350">
    <property type="hits" value="6 hits in 114 CRISPR screens"/>
</dbReference>
<dbReference type="ChiTaRS" id="Mlh1">
    <property type="organism name" value="mouse"/>
</dbReference>
<dbReference type="PRO" id="PR:Q9JK91"/>
<dbReference type="Proteomes" id="UP000000589">
    <property type="component" value="Chromosome 9"/>
</dbReference>
<dbReference type="RNAct" id="Q9JK91">
    <property type="molecule type" value="protein"/>
</dbReference>
<dbReference type="Bgee" id="ENSMUSG00000032498">
    <property type="expression patterns" value="Expressed in undifferentiated genital tubercle and 248 other cell types or tissues"/>
</dbReference>
<dbReference type="ExpressionAtlas" id="Q9JK91">
    <property type="expression patterns" value="baseline and differential"/>
</dbReference>
<dbReference type="GO" id="GO:0005712">
    <property type="term" value="C:chiasma"/>
    <property type="evidence" value="ECO:0000314"/>
    <property type="project" value="MGI"/>
</dbReference>
<dbReference type="GO" id="GO:0005694">
    <property type="term" value="C:chromosome"/>
    <property type="evidence" value="ECO:0000314"/>
    <property type="project" value="UniProtKB"/>
</dbReference>
<dbReference type="GO" id="GO:0000793">
    <property type="term" value="C:condensed chromosome"/>
    <property type="evidence" value="ECO:0000314"/>
    <property type="project" value="MGI"/>
</dbReference>
<dbReference type="GO" id="GO:0000794">
    <property type="term" value="C:condensed nuclear chromosome"/>
    <property type="evidence" value="ECO:0000314"/>
    <property type="project" value="MGI"/>
</dbReference>
<dbReference type="GO" id="GO:0005715">
    <property type="term" value="C:late recombination nodule"/>
    <property type="evidence" value="ECO:0000314"/>
    <property type="project" value="MGI"/>
</dbReference>
<dbReference type="GO" id="GO:0001673">
    <property type="term" value="C:male germ cell nucleus"/>
    <property type="evidence" value="ECO:0000314"/>
    <property type="project" value="MGI"/>
</dbReference>
<dbReference type="GO" id="GO:0032389">
    <property type="term" value="C:MutLalpha complex"/>
    <property type="evidence" value="ECO:0000314"/>
    <property type="project" value="MGI"/>
</dbReference>
<dbReference type="GO" id="GO:0005654">
    <property type="term" value="C:nucleoplasm"/>
    <property type="evidence" value="ECO:0000304"/>
    <property type="project" value="Reactome"/>
</dbReference>
<dbReference type="GO" id="GO:0000795">
    <property type="term" value="C:synaptonemal complex"/>
    <property type="evidence" value="ECO:0000314"/>
    <property type="project" value="MGI"/>
</dbReference>
<dbReference type="GO" id="GO:0005524">
    <property type="term" value="F:ATP binding"/>
    <property type="evidence" value="ECO:0007669"/>
    <property type="project" value="UniProtKB-KW"/>
</dbReference>
<dbReference type="GO" id="GO:0016887">
    <property type="term" value="F:ATP hydrolysis activity"/>
    <property type="evidence" value="ECO:0007669"/>
    <property type="project" value="InterPro"/>
</dbReference>
<dbReference type="GO" id="GO:0140664">
    <property type="term" value="F:ATP-dependent DNA damage sensor activity"/>
    <property type="evidence" value="ECO:0007669"/>
    <property type="project" value="InterPro"/>
</dbReference>
<dbReference type="GO" id="GO:0003682">
    <property type="term" value="F:chromatin binding"/>
    <property type="evidence" value="ECO:0000314"/>
    <property type="project" value="MGI"/>
</dbReference>
<dbReference type="GO" id="GO:0019899">
    <property type="term" value="F:enzyme binding"/>
    <property type="evidence" value="ECO:0007669"/>
    <property type="project" value="Ensembl"/>
</dbReference>
<dbReference type="GO" id="GO:0032137">
    <property type="term" value="F:guanine/thymine mispair binding"/>
    <property type="evidence" value="ECO:0000316"/>
    <property type="project" value="MGI"/>
</dbReference>
<dbReference type="GO" id="GO:0032407">
    <property type="term" value="F:MutSalpha complex binding"/>
    <property type="evidence" value="ECO:0007669"/>
    <property type="project" value="Ensembl"/>
</dbReference>
<dbReference type="GO" id="GO:0003697">
    <property type="term" value="F:single-stranded DNA binding"/>
    <property type="evidence" value="ECO:0007669"/>
    <property type="project" value="Ensembl"/>
</dbReference>
<dbReference type="GO" id="GO:0006974">
    <property type="term" value="P:DNA damage response"/>
    <property type="evidence" value="ECO:0000315"/>
    <property type="project" value="MGI"/>
</dbReference>
<dbReference type="GO" id="GO:0006281">
    <property type="term" value="P:DNA repair"/>
    <property type="evidence" value="ECO:0000315"/>
    <property type="project" value="MGI"/>
</dbReference>
<dbReference type="GO" id="GO:0006303">
    <property type="term" value="P:double-strand break repair via nonhomologous end joining"/>
    <property type="evidence" value="ECO:0000315"/>
    <property type="project" value="MGI"/>
</dbReference>
<dbReference type="GO" id="GO:0016321">
    <property type="term" value="P:female meiosis chromosome segregation"/>
    <property type="evidence" value="ECO:0000315"/>
    <property type="project" value="MGI"/>
</dbReference>
<dbReference type="GO" id="GO:0007129">
    <property type="term" value="P:homologous chromosome pairing at meiosis"/>
    <property type="evidence" value="ECO:0000315"/>
    <property type="project" value="MGI"/>
</dbReference>
<dbReference type="GO" id="GO:0045143">
    <property type="term" value="P:homologous chromosome segregation"/>
    <property type="evidence" value="ECO:0000315"/>
    <property type="project" value="MGI"/>
</dbReference>
<dbReference type="GO" id="GO:0008630">
    <property type="term" value="P:intrinsic apoptotic signaling pathway in response to DNA damage"/>
    <property type="evidence" value="ECO:0000315"/>
    <property type="project" value="MGI"/>
</dbReference>
<dbReference type="GO" id="GO:0045190">
    <property type="term" value="P:isotype switching"/>
    <property type="evidence" value="ECO:0000315"/>
    <property type="project" value="MGI"/>
</dbReference>
<dbReference type="GO" id="GO:0007060">
    <property type="term" value="P:male meiosis chromosome segregation"/>
    <property type="evidence" value="ECO:0000315"/>
    <property type="project" value="MGI"/>
</dbReference>
<dbReference type="GO" id="GO:0007140">
    <property type="term" value="P:male meiotic nuclear division"/>
    <property type="evidence" value="ECO:0000315"/>
    <property type="project" value="MGI"/>
</dbReference>
<dbReference type="GO" id="GO:0051321">
    <property type="term" value="P:meiotic cell cycle"/>
    <property type="evidence" value="ECO:0000314"/>
    <property type="project" value="MGI"/>
</dbReference>
<dbReference type="GO" id="GO:0045132">
    <property type="term" value="P:meiotic chromosome segregation"/>
    <property type="evidence" value="ECO:0000315"/>
    <property type="project" value="MGI"/>
</dbReference>
<dbReference type="GO" id="GO:0043060">
    <property type="term" value="P:meiotic metaphase I homologous chromosome alignment"/>
    <property type="evidence" value="ECO:0000315"/>
    <property type="project" value="MGI"/>
</dbReference>
<dbReference type="GO" id="GO:0051257">
    <property type="term" value="P:meiotic spindle midzone assembly"/>
    <property type="evidence" value="ECO:0000315"/>
    <property type="project" value="MGI"/>
</dbReference>
<dbReference type="GO" id="GO:0045141">
    <property type="term" value="P:meiotic telomere clustering"/>
    <property type="evidence" value="ECO:0000315"/>
    <property type="project" value="MGI"/>
</dbReference>
<dbReference type="GO" id="GO:0006298">
    <property type="term" value="P:mismatch repair"/>
    <property type="evidence" value="ECO:0000314"/>
    <property type="project" value="MGI"/>
</dbReference>
<dbReference type="GO" id="GO:0045950">
    <property type="term" value="P:negative regulation of mitotic recombination"/>
    <property type="evidence" value="ECO:0000315"/>
    <property type="project" value="MGI"/>
</dbReference>
<dbReference type="GO" id="GO:0000289">
    <property type="term" value="P:nuclear-transcribed mRNA poly(A) tail shortening"/>
    <property type="evidence" value="ECO:0000315"/>
    <property type="project" value="MGI"/>
</dbReference>
<dbReference type="GO" id="GO:0048477">
    <property type="term" value="P:oogenesis"/>
    <property type="evidence" value="ECO:0000315"/>
    <property type="project" value="MGI"/>
</dbReference>
<dbReference type="GO" id="GO:0048298">
    <property type="term" value="P:positive regulation of isotype switching to IgA isotypes"/>
    <property type="evidence" value="ECO:0000315"/>
    <property type="project" value="CAFA"/>
</dbReference>
<dbReference type="GO" id="GO:0048304">
    <property type="term" value="P:positive regulation of isotype switching to IgG isotypes"/>
    <property type="evidence" value="ECO:0000315"/>
    <property type="project" value="CAFA"/>
</dbReference>
<dbReference type="GO" id="GO:0007131">
    <property type="term" value="P:reciprocal meiotic recombination"/>
    <property type="evidence" value="ECO:0000315"/>
    <property type="project" value="MGI"/>
</dbReference>
<dbReference type="GO" id="GO:0000712">
    <property type="term" value="P:resolution of meiotic recombination intermediates"/>
    <property type="evidence" value="ECO:0000315"/>
    <property type="project" value="MGI"/>
</dbReference>
<dbReference type="GO" id="GO:0009617">
    <property type="term" value="P:response to bacterium"/>
    <property type="evidence" value="ECO:0000270"/>
    <property type="project" value="MGI"/>
</dbReference>
<dbReference type="GO" id="GO:0016446">
    <property type="term" value="P:somatic hypermutation of immunoglobulin genes"/>
    <property type="evidence" value="ECO:0000315"/>
    <property type="project" value="MGI"/>
</dbReference>
<dbReference type="GO" id="GO:0016447">
    <property type="term" value="P:somatic recombination of immunoglobulin gene segments"/>
    <property type="evidence" value="ECO:0000315"/>
    <property type="project" value="MGI"/>
</dbReference>
<dbReference type="GO" id="GO:0002204">
    <property type="term" value="P:somatic recombination of immunoglobulin genes involved in immune response"/>
    <property type="evidence" value="ECO:0000316"/>
    <property type="project" value="MGI"/>
</dbReference>
<dbReference type="GO" id="GO:0007283">
    <property type="term" value="P:spermatogenesis"/>
    <property type="evidence" value="ECO:0000315"/>
    <property type="project" value="MGI"/>
</dbReference>
<dbReference type="CDD" id="cd16926">
    <property type="entry name" value="HATPase_MutL-MLH-PMS-like"/>
    <property type="match status" value="1"/>
</dbReference>
<dbReference type="CDD" id="cd03483">
    <property type="entry name" value="MutL_Trans_MLH1"/>
    <property type="match status" value="1"/>
</dbReference>
<dbReference type="FunFam" id="3.30.230.10:FF:000014">
    <property type="entry name" value="DNA mismatch repair protein Mlh1"/>
    <property type="match status" value="1"/>
</dbReference>
<dbReference type="FunFam" id="3.30.565.10:FF:000034">
    <property type="entry name" value="DNA mismatch repair protein mlh1, putative"/>
    <property type="match status" value="1"/>
</dbReference>
<dbReference type="Gene3D" id="3.30.230.10">
    <property type="match status" value="1"/>
</dbReference>
<dbReference type="Gene3D" id="3.30.565.10">
    <property type="entry name" value="Histidine kinase-like ATPase, C-terminal domain"/>
    <property type="match status" value="1"/>
</dbReference>
<dbReference type="InterPro" id="IPR014762">
    <property type="entry name" value="DNA_mismatch_repair_CS"/>
</dbReference>
<dbReference type="InterPro" id="IPR013507">
    <property type="entry name" value="DNA_mismatch_S5_2-like"/>
</dbReference>
<dbReference type="InterPro" id="IPR036890">
    <property type="entry name" value="HATPase_C_sf"/>
</dbReference>
<dbReference type="InterPro" id="IPR032189">
    <property type="entry name" value="Mlh1_C"/>
</dbReference>
<dbReference type="InterPro" id="IPR002099">
    <property type="entry name" value="MutL/Mlh/PMS"/>
</dbReference>
<dbReference type="InterPro" id="IPR038973">
    <property type="entry name" value="MutL/Mlh/Pms-like"/>
</dbReference>
<dbReference type="InterPro" id="IPR020568">
    <property type="entry name" value="Ribosomal_Su5_D2-typ_SF"/>
</dbReference>
<dbReference type="InterPro" id="IPR014721">
    <property type="entry name" value="Ribsml_uS5_D2-typ_fold_subgr"/>
</dbReference>
<dbReference type="NCBIfam" id="TIGR00585">
    <property type="entry name" value="mutl"/>
    <property type="match status" value="1"/>
</dbReference>
<dbReference type="PANTHER" id="PTHR10073">
    <property type="entry name" value="DNA MISMATCH REPAIR PROTEIN MLH, PMS, MUTL"/>
    <property type="match status" value="1"/>
</dbReference>
<dbReference type="PANTHER" id="PTHR10073:SF12">
    <property type="entry name" value="DNA MISMATCH REPAIR PROTEIN MLH1"/>
    <property type="match status" value="1"/>
</dbReference>
<dbReference type="Pfam" id="PF01119">
    <property type="entry name" value="DNA_mis_repair"/>
    <property type="match status" value="1"/>
</dbReference>
<dbReference type="Pfam" id="PF13589">
    <property type="entry name" value="HATPase_c_3"/>
    <property type="match status" value="1"/>
</dbReference>
<dbReference type="Pfam" id="PF16413">
    <property type="entry name" value="Mlh1_C"/>
    <property type="match status" value="1"/>
</dbReference>
<dbReference type="SMART" id="SM01340">
    <property type="entry name" value="DNA_mis_repair"/>
    <property type="match status" value="1"/>
</dbReference>
<dbReference type="SUPFAM" id="SSF55874">
    <property type="entry name" value="ATPase domain of HSP90 chaperone/DNA topoisomerase II/histidine kinase"/>
    <property type="match status" value="1"/>
</dbReference>
<dbReference type="SUPFAM" id="SSF54211">
    <property type="entry name" value="Ribosomal protein S5 domain 2-like"/>
    <property type="match status" value="1"/>
</dbReference>
<dbReference type="PROSITE" id="PS00058">
    <property type="entry name" value="DNA_MISMATCH_REPAIR_1"/>
    <property type="match status" value="1"/>
</dbReference>
<accession>Q9JK91</accession>
<accession>Q3TG77</accession>
<accession>Q62454</accession>
<comment type="function">
    <text evidence="1">Heterodimerizes with Pms2 to form MutL alpha, a component of the post-replicative DNA mismatch repair system (MMR). DNA repair is initiated by MutS alpha (Msh2-Msh6) or MutS beta (MSH2-MSH3) binding to a dsDNA mismatch, then MutL alpha is recruited to the heteroduplex. Assembly of the MutL-MutS-heteroduplex ternary complex in presence of RFC and PCNA is sufficient to activate endonuclease activity of Pms2. It introduces single-strand breaks near the mismatch and thus generates new entry points for the exonuclease EXO1 to degrade the strand containing the mismatch. DNA methylation would prevent cleavage and therefore assure that only the newly mutated DNA strand is going to be corrected. MutL alpha (Mlh1-Pms2) interacts physically with the clamp loader subunits of DNA polymerase III, suggesting that it may play a role to recruit the DNA polymerase III to the site of the MMR. Also implicated in DNA damage signaling, a process which induces cell cycle arrest and can lead to apoptosis in case of major DNA damages. Heterodimerizes with Mlh3 to form MutL gamma which plays a role in meiosis (By similarity).</text>
</comment>
<comment type="subunit">
    <text evidence="2">Component of the DNA mismatch repair (MMR) complex composed at least of MSH2, MSH3, MSH6, PMS1 and MLH1. Heterodimer of MLH1 and PMS2 (MutL alpha), MLH1 and PMS1 (MutL beta) or MLH1 and MLH3 (MutL gamma). Forms a ternary complex with MutS alpha (MSH2-MSH6) or MutS beta (MSH2-MSH3). Part of the BRCA1-associated genome surveillance complex (BASC), which contains BRCA1, MSH2, MSH6, MLH1, ATM, BLM, PMS2 and the RAD50-MRE11-NBS1 protein complex. This association could be a dynamic process changing throughout the cell cycle and within subnuclear domains. Interacts with MCM9; the interaction recruits MLH1 to chromatin. Interacts with MCM8. Interacts with PMS2. Interacts with MBD4. Interacts with EXO1. Interacts with MTMR15/FAN1.</text>
</comment>
<comment type="subcellular location">
    <subcellularLocation>
        <location evidence="2">Nucleus</location>
    </subcellularLocation>
    <subcellularLocation>
        <location evidence="4">Chromosome</location>
    </subcellularLocation>
    <text evidence="2">Recruited to chromatin in a MCM9-dependent manner.</text>
</comment>
<comment type="PTM">
    <text evidence="2">Acetylated. Deacetylated by HDAC6 which prevents the MutL alpha complex, formed by the MLH1-PMS2 heterodimer, from being recruited to the MutS alpha complex, formed by the MSH2-MSH6 heterodimer, leading to tolerance of DNA damage.</text>
</comment>
<comment type="similarity">
    <text evidence="5">Belongs to the DNA mismatch repair MutL/HexB family.</text>
</comment>
<feature type="chain" id="PRO_0000178001" description="DNA mismatch repair protein Mlh1">
    <location>
        <begin position="1"/>
        <end position="760"/>
    </location>
</feature>
<feature type="region of interest" description="Disordered" evidence="3">
    <location>
        <begin position="354"/>
        <end position="375"/>
    </location>
</feature>
<feature type="region of interest" description="Disordered" evidence="3">
    <location>
        <begin position="400"/>
        <end position="488"/>
    </location>
</feature>
<feature type="region of interest" description="Interaction with EXO1" evidence="2">
    <location>
        <begin position="412"/>
        <end position="654"/>
    </location>
</feature>
<feature type="short sequence motif" description="Nuclear localization signal" evidence="2">
    <location>
        <begin position="475"/>
        <end position="478"/>
    </location>
</feature>
<feature type="compositionally biased region" description="Low complexity" evidence="3">
    <location>
        <begin position="363"/>
        <end position="375"/>
    </location>
</feature>
<feature type="compositionally biased region" description="Polar residues" evidence="3">
    <location>
        <begin position="400"/>
        <end position="409"/>
    </location>
</feature>
<feature type="compositionally biased region" description="Basic and acidic residues" evidence="3">
    <location>
        <begin position="417"/>
        <end position="428"/>
    </location>
</feature>
<feature type="compositionally biased region" description="Low complexity" evidence="3">
    <location>
        <begin position="434"/>
        <end position="446"/>
    </location>
</feature>
<feature type="compositionally biased region" description="Polar residues" evidence="3">
    <location>
        <begin position="455"/>
        <end position="472"/>
    </location>
</feature>
<feature type="binding site" evidence="2">
    <location>
        <position position="38"/>
    </location>
    <ligand>
        <name>ATP</name>
        <dbReference type="ChEBI" id="CHEBI:30616"/>
    </ligand>
</feature>
<feature type="binding site" evidence="2">
    <location>
        <position position="63"/>
    </location>
    <ligand>
        <name>ATP</name>
        <dbReference type="ChEBI" id="CHEBI:30616"/>
    </ligand>
</feature>
<feature type="binding site" evidence="2">
    <location>
        <begin position="82"/>
        <end position="84"/>
    </location>
    <ligand>
        <name>ATP</name>
        <dbReference type="ChEBI" id="CHEBI:30616"/>
    </ligand>
</feature>
<feature type="binding site" evidence="2">
    <location>
        <begin position="100"/>
        <end position="104"/>
    </location>
    <ligand>
        <name>ATP</name>
        <dbReference type="ChEBI" id="CHEBI:30616"/>
    </ligand>
</feature>
<feature type="modified residue" description="N6-acetyllysine" evidence="2">
    <location>
        <position position="33"/>
    </location>
</feature>
<feature type="modified residue" description="N6-acetyllysine" evidence="2">
    <location>
        <position position="241"/>
    </location>
</feature>
<feature type="modified residue" description="N6-acetyllysine" evidence="2">
    <location>
        <position position="377"/>
    </location>
</feature>
<feature type="modified residue" description="Phosphoserine" evidence="2">
    <location>
        <position position="481"/>
    </location>
</feature>
<feature type="sequence conflict" description="In Ref. 1; AAF64514." evidence="5" ref="1">
    <original>E</original>
    <variation>D</variation>
    <location>
        <position position="390"/>
    </location>
</feature>
<feature type="sequence conflict" description="In Ref. 1; AAF64514." evidence="5" ref="1">
    <original>G</original>
    <variation>V</variation>
    <location>
        <position position="404"/>
    </location>
</feature>
<feature type="sequence conflict" description="In Ref. 1; AAF64514." evidence="5" ref="1">
    <original>M</original>
    <variation>I</variation>
    <location>
        <position position="528"/>
    </location>
</feature>
<proteinExistence type="evidence at protein level"/>
<protein>
    <recommendedName>
        <fullName>DNA mismatch repair protein Mlh1</fullName>
    </recommendedName>
    <alternativeName>
        <fullName>MutL protein homolog 1</fullName>
    </alternativeName>
</protein>
<organism>
    <name type="scientific">Mus musculus</name>
    <name type="common">Mouse</name>
    <dbReference type="NCBI Taxonomy" id="10090"/>
    <lineage>
        <taxon>Eukaryota</taxon>
        <taxon>Metazoa</taxon>
        <taxon>Chordata</taxon>
        <taxon>Craniata</taxon>
        <taxon>Vertebrata</taxon>
        <taxon>Euteleostomi</taxon>
        <taxon>Mammalia</taxon>
        <taxon>Eutheria</taxon>
        <taxon>Euarchontoglires</taxon>
        <taxon>Glires</taxon>
        <taxon>Rodentia</taxon>
        <taxon>Myomorpha</taxon>
        <taxon>Muroidea</taxon>
        <taxon>Muridae</taxon>
        <taxon>Murinae</taxon>
        <taxon>Mus</taxon>
        <taxon>Mus</taxon>
    </lineage>
</organism>
<keyword id="KW-0007">Acetylation</keyword>
<keyword id="KW-0067">ATP-binding</keyword>
<keyword id="KW-0131">Cell cycle</keyword>
<keyword id="KW-0158">Chromosome</keyword>
<keyword id="KW-0227">DNA damage</keyword>
<keyword id="KW-0234">DNA repair</keyword>
<keyword id="KW-0547">Nucleotide-binding</keyword>
<keyword id="KW-0539">Nucleus</keyword>
<keyword id="KW-0597">Phosphoprotein</keyword>
<keyword id="KW-1185">Reference proteome</keyword>
<evidence type="ECO:0000250" key="1"/>
<evidence type="ECO:0000250" key="2">
    <source>
        <dbReference type="UniProtKB" id="P40692"/>
    </source>
</evidence>
<evidence type="ECO:0000256" key="3">
    <source>
        <dbReference type="SAM" id="MobiDB-lite"/>
    </source>
</evidence>
<evidence type="ECO:0000269" key="4">
    <source>
    </source>
</evidence>
<evidence type="ECO:0000305" key="5"/>
<reference key="1">
    <citation type="submission" date="2000-03" db="EMBL/GenBank/DDBJ databases">
        <title>Cloning of the cDNA of the MutL homolog, MLH1 from mouse testis.</title>
        <authorList>
            <person name="Kumaran M."/>
            <person name="Rao M.R.S."/>
        </authorList>
    </citation>
    <scope>NUCLEOTIDE SEQUENCE [MRNA]</scope>
    <source>
        <tissue>Testis</tissue>
    </source>
</reference>
<reference key="2">
    <citation type="journal article" date="2005" name="Science">
        <title>The transcriptional landscape of the mammalian genome.</title>
        <authorList>
            <person name="Carninci P."/>
            <person name="Kasukawa T."/>
            <person name="Katayama S."/>
            <person name="Gough J."/>
            <person name="Frith M.C."/>
            <person name="Maeda N."/>
            <person name="Oyama R."/>
            <person name="Ravasi T."/>
            <person name="Lenhard B."/>
            <person name="Wells C."/>
            <person name="Kodzius R."/>
            <person name="Shimokawa K."/>
            <person name="Bajic V.B."/>
            <person name="Brenner S.E."/>
            <person name="Batalov S."/>
            <person name="Forrest A.R."/>
            <person name="Zavolan M."/>
            <person name="Davis M.J."/>
            <person name="Wilming L.G."/>
            <person name="Aidinis V."/>
            <person name="Allen J.E."/>
            <person name="Ambesi-Impiombato A."/>
            <person name="Apweiler R."/>
            <person name="Aturaliya R.N."/>
            <person name="Bailey T.L."/>
            <person name="Bansal M."/>
            <person name="Baxter L."/>
            <person name="Beisel K.W."/>
            <person name="Bersano T."/>
            <person name="Bono H."/>
            <person name="Chalk A.M."/>
            <person name="Chiu K.P."/>
            <person name="Choudhary V."/>
            <person name="Christoffels A."/>
            <person name="Clutterbuck D.R."/>
            <person name="Crowe M.L."/>
            <person name="Dalla E."/>
            <person name="Dalrymple B.P."/>
            <person name="de Bono B."/>
            <person name="Della Gatta G."/>
            <person name="di Bernardo D."/>
            <person name="Down T."/>
            <person name="Engstrom P."/>
            <person name="Fagiolini M."/>
            <person name="Faulkner G."/>
            <person name="Fletcher C.F."/>
            <person name="Fukushima T."/>
            <person name="Furuno M."/>
            <person name="Futaki S."/>
            <person name="Gariboldi M."/>
            <person name="Georgii-Hemming P."/>
            <person name="Gingeras T.R."/>
            <person name="Gojobori T."/>
            <person name="Green R.E."/>
            <person name="Gustincich S."/>
            <person name="Harbers M."/>
            <person name="Hayashi Y."/>
            <person name="Hensch T.K."/>
            <person name="Hirokawa N."/>
            <person name="Hill D."/>
            <person name="Huminiecki L."/>
            <person name="Iacono M."/>
            <person name="Ikeo K."/>
            <person name="Iwama A."/>
            <person name="Ishikawa T."/>
            <person name="Jakt M."/>
            <person name="Kanapin A."/>
            <person name="Katoh M."/>
            <person name="Kawasawa Y."/>
            <person name="Kelso J."/>
            <person name="Kitamura H."/>
            <person name="Kitano H."/>
            <person name="Kollias G."/>
            <person name="Krishnan S.P."/>
            <person name="Kruger A."/>
            <person name="Kummerfeld S.K."/>
            <person name="Kurochkin I.V."/>
            <person name="Lareau L.F."/>
            <person name="Lazarevic D."/>
            <person name="Lipovich L."/>
            <person name="Liu J."/>
            <person name="Liuni S."/>
            <person name="McWilliam S."/>
            <person name="Madan Babu M."/>
            <person name="Madera M."/>
            <person name="Marchionni L."/>
            <person name="Matsuda H."/>
            <person name="Matsuzawa S."/>
            <person name="Miki H."/>
            <person name="Mignone F."/>
            <person name="Miyake S."/>
            <person name="Morris K."/>
            <person name="Mottagui-Tabar S."/>
            <person name="Mulder N."/>
            <person name="Nakano N."/>
            <person name="Nakauchi H."/>
            <person name="Ng P."/>
            <person name="Nilsson R."/>
            <person name="Nishiguchi S."/>
            <person name="Nishikawa S."/>
            <person name="Nori F."/>
            <person name="Ohara O."/>
            <person name="Okazaki Y."/>
            <person name="Orlando V."/>
            <person name="Pang K.C."/>
            <person name="Pavan W.J."/>
            <person name="Pavesi G."/>
            <person name="Pesole G."/>
            <person name="Petrovsky N."/>
            <person name="Piazza S."/>
            <person name="Reed J."/>
            <person name="Reid J.F."/>
            <person name="Ring B.Z."/>
            <person name="Ringwald M."/>
            <person name="Rost B."/>
            <person name="Ruan Y."/>
            <person name="Salzberg S.L."/>
            <person name="Sandelin A."/>
            <person name="Schneider C."/>
            <person name="Schoenbach C."/>
            <person name="Sekiguchi K."/>
            <person name="Semple C.A."/>
            <person name="Seno S."/>
            <person name="Sessa L."/>
            <person name="Sheng Y."/>
            <person name="Shibata Y."/>
            <person name="Shimada H."/>
            <person name="Shimada K."/>
            <person name="Silva D."/>
            <person name="Sinclair B."/>
            <person name="Sperling S."/>
            <person name="Stupka E."/>
            <person name="Sugiura K."/>
            <person name="Sultana R."/>
            <person name="Takenaka Y."/>
            <person name="Taki K."/>
            <person name="Tammoja K."/>
            <person name="Tan S.L."/>
            <person name="Tang S."/>
            <person name="Taylor M.S."/>
            <person name="Tegner J."/>
            <person name="Teichmann S.A."/>
            <person name="Ueda H.R."/>
            <person name="van Nimwegen E."/>
            <person name="Verardo R."/>
            <person name="Wei C.L."/>
            <person name="Yagi K."/>
            <person name="Yamanishi H."/>
            <person name="Zabarovsky E."/>
            <person name="Zhu S."/>
            <person name="Zimmer A."/>
            <person name="Hide W."/>
            <person name="Bult C."/>
            <person name="Grimmond S.M."/>
            <person name="Teasdale R.D."/>
            <person name="Liu E.T."/>
            <person name="Brusic V."/>
            <person name="Quackenbush J."/>
            <person name="Wahlestedt C."/>
            <person name="Mattick J.S."/>
            <person name="Hume D.A."/>
            <person name="Kai C."/>
            <person name="Sasaki D."/>
            <person name="Tomaru Y."/>
            <person name="Fukuda S."/>
            <person name="Kanamori-Katayama M."/>
            <person name="Suzuki M."/>
            <person name="Aoki J."/>
            <person name="Arakawa T."/>
            <person name="Iida J."/>
            <person name="Imamura K."/>
            <person name="Itoh M."/>
            <person name="Kato T."/>
            <person name="Kawaji H."/>
            <person name="Kawagashira N."/>
            <person name="Kawashima T."/>
            <person name="Kojima M."/>
            <person name="Kondo S."/>
            <person name="Konno H."/>
            <person name="Nakano K."/>
            <person name="Ninomiya N."/>
            <person name="Nishio T."/>
            <person name="Okada M."/>
            <person name="Plessy C."/>
            <person name="Shibata K."/>
            <person name="Shiraki T."/>
            <person name="Suzuki S."/>
            <person name="Tagami M."/>
            <person name="Waki K."/>
            <person name="Watahiki A."/>
            <person name="Okamura-Oho Y."/>
            <person name="Suzuki H."/>
            <person name="Kawai J."/>
            <person name="Hayashizaki Y."/>
        </authorList>
    </citation>
    <scope>NUCLEOTIDE SEQUENCE [LARGE SCALE MRNA]</scope>
    <source>
        <strain>C57BL/6J</strain>
        <tissue>Heart</tissue>
    </source>
</reference>
<reference key="3">
    <citation type="journal article" date="1996" name="Cell">
        <title>Meiotic pachytene arrest in MLH1-deficient mice.</title>
        <authorList>
            <person name="Edelmann W."/>
            <person name="Cohen P.E."/>
            <person name="Kane M."/>
            <person name="Lau K."/>
            <person name="Morrow B."/>
            <person name="Bennett S."/>
            <person name="Umar A."/>
            <person name="Kunkel T."/>
            <person name="Cattoretti G."/>
            <person name="Chaganti R."/>
            <person name="Pollard J.W."/>
            <person name="Kolodner R.D."/>
            <person name="Kucherlapati R."/>
        </authorList>
    </citation>
    <scope>NUCLEOTIDE SEQUENCE [GENOMIC DNA] OF 1-151</scope>
</reference>
<reference key="4">
    <citation type="journal article" date="2010" name="Cell">
        <title>A tissue-specific atlas of mouse protein phosphorylation and expression.</title>
        <authorList>
            <person name="Huttlin E.L."/>
            <person name="Jedrychowski M.P."/>
            <person name="Elias J.E."/>
            <person name="Goswami T."/>
            <person name="Rad R."/>
            <person name="Beausoleil S.A."/>
            <person name="Villen J."/>
            <person name="Haas W."/>
            <person name="Sowa M.E."/>
            <person name="Gygi S.P."/>
        </authorList>
    </citation>
    <scope>IDENTIFICATION BY MASS SPECTROMETRY [LARGE SCALE ANALYSIS]</scope>
    <source>
        <tissue>Liver</tissue>
        <tissue>Spleen</tissue>
    </source>
</reference>
<reference key="5">
    <citation type="journal article" date="2019" name="Nucleic Acids Res.">
        <title>SCRE serves as a unique synaptonemal complex fastener and is essential for progression of meiosis prophase I in mice.</title>
        <authorList>
            <person name="Liu H."/>
            <person name="Huang T."/>
            <person name="Li M."/>
            <person name="Li M."/>
            <person name="Zhang C."/>
            <person name="Jiang J."/>
            <person name="Yu X."/>
            <person name="Yin Y."/>
            <person name="Zhang F."/>
            <person name="Lu G."/>
            <person name="Luo M.C."/>
            <person name="Zhang L.R."/>
            <person name="Li J."/>
            <person name="Liu K."/>
            <person name="Chen Z.J."/>
        </authorList>
    </citation>
    <scope>SUBCELLULAR LOCATION</scope>
</reference>
<sequence length="760" mass="84670">MAFVAGVIRRLDETVVNRIAAGEVIQRPANAIKEMIENCLDAKSTNIQVVVKEGGLKLIQIQDNGTGIRKEDLDIVCERFTTSKLQTFEDLASISTYGFRGEALASISHVAHVTITTKTADGKCAYRASYSDGKLQAPPKPCAGNQGTLITVEDLFYNIITRRKALKNPSEEYGKILEVVGRYSIHNSGISFSVKKQGETVSDVRTLPNATTVDNIRSIFGNAVSRELIEVGCEDKTLAFKMNGYISNANYSVKKCIFLLFINHRLVESAALRKAIETVYAAYLPKNTHPFLYLSLEISPQNVDVNVHPTKHEVHFLHEESILQRVQQHIESKLLGSNSSRMYFTQTLLPGLAGPSGEAARPTTGVASSSTSGSGDKVYAYQMVRTDSREQKLDAFLQPVSSLGPSQPQDPAPVRGARTEGSPERATREDEEMLALPAPAEAAAESENLERESLMETSDAAQKAAPTSSPGSSRKRHREDSDVEMVENASGKEMTAACYPRRRIINLTSVLSLQEEISERCHETLREMLRNHSFVGCVNPQWALAQHQTKLYLLNTTKLSEELFYQILIYDFANFGVLRLSEPAPLFDLAMLALDSPESGWTEDDGPKEGLAEYIVEFLKKKAEMLADYFSVEIDEEGNLIGLPLLIDSYVPPLEGLPIFILRLATEVNWDEEKECFESLSKECAMFYSIRKQYILEESTLSGQQSDMPGSTSKPWKWTVEHIIYKAFRSHLLPPKHFTEDGNVLQLANLPDLYKVFERC</sequence>
<gene>
    <name type="primary">Mlh1</name>
</gene>
<name>MLH1_MOUSE</name>